<feature type="chain" id="PRO_0000280898" description="5-aminolevulinate synthase">
    <location>
        <begin position="1"/>
        <end position="414"/>
    </location>
</feature>
<feature type="active site" evidence="1">
    <location>
        <position position="244"/>
    </location>
</feature>
<feature type="binding site" evidence="1">
    <location>
        <position position="22"/>
    </location>
    <ligand>
        <name>substrate</name>
    </ligand>
</feature>
<feature type="binding site" evidence="1">
    <location>
        <position position="133"/>
    </location>
    <ligand>
        <name>substrate</name>
    </ligand>
</feature>
<feature type="binding site" evidence="1">
    <location>
        <position position="152"/>
    </location>
    <ligand>
        <name>substrate</name>
    </ligand>
</feature>
<feature type="binding site" description="in other chain" evidence="1">
    <location>
        <position position="185"/>
    </location>
    <ligand>
        <name>pyridoxal 5'-phosphate</name>
        <dbReference type="ChEBI" id="CHEBI:597326"/>
        <note>ligand shared between dimeric partners</note>
    </ligand>
</feature>
<feature type="binding site" description="in other chain" evidence="1">
    <location>
        <position position="213"/>
    </location>
    <ligand>
        <name>pyridoxal 5'-phosphate</name>
        <dbReference type="ChEBI" id="CHEBI:597326"/>
        <note>ligand shared between dimeric partners</note>
    </ligand>
</feature>
<feature type="binding site" description="in other chain" evidence="1">
    <location>
        <position position="241"/>
    </location>
    <ligand>
        <name>pyridoxal 5'-phosphate</name>
        <dbReference type="ChEBI" id="CHEBI:597326"/>
        <note>ligand shared between dimeric partners</note>
    </ligand>
</feature>
<feature type="binding site" evidence="1">
    <location>
        <position position="273"/>
    </location>
    <ligand>
        <name>pyridoxal 5'-phosphate</name>
        <dbReference type="ChEBI" id="CHEBI:597326"/>
        <note>ligand shared between dimeric partners</note>
    </ligand>
</feature>
<feature type="binding site" evidence="1">
    <location>
        <position position="274"/>
    </location>
    <ligand>
        <name>pyridoxal 5'-phosphate</name>
        <dbReference type="ChEBI" id="CHEBI:597326"/>
        <note>ligand shared between dimeric partners</note>
    </ligand>
</feature>
<feature type="binding site" evidence="1">
    <location>
        <position position="359"/>
    </location>
    <ligand>
        <name>substrate</name>
    </ligand>
</feature>
<feature type="modified residue" description="N6-(pyridoxal phosphate)lysine" evidence="1">
    <location>
        <position position="244"/>
    </location>
</feature>
<gene>
    <name type="primary">hemA</name>
    <name type="ordered locus">RF_1334</name>
</gene>
<evidence type="ECO:0000250" key="1">
    <source>
        <dbReference type="UniProtKB" id="P18079"/>
    </source>
</evidence>
<evidence type="ECO:0000305" key="2"/>
<reference key="1">
    <citation type="journal article" date="2005" name="PLoS Biol.">
        <title>The genome sequence of Rickettsia felis identifies the first putative conjugative plasmid in an obligate intracellular parasite.</title>
        <authorList>
            <person name="Ogata H."/>
            <person name="Renesto P."/>
            <person name="Audic S."/>
            <person name="Robert C."/>
            <person name="Blanc G."/>
            <person name="Fournier P.-E."/>
            <person name="Parinello H."/>
            <person name="Claverie J.-M."/>
            <person name="Raoult D."/>
        </authorList>
    </citation>
    <scope>NUCLEOTIDE SEQUENCE [LARGE SCALE GENOMIC DNA]</scope>
    <source>
        <strain>ATCC VR-1525 / URRWXCal2</strain>
    </source>
</reference>
<keyword id="KW-0012">Acyltransferase</keyword>
<keyword id="KW-0350">Heme biosynthesis</keyword>
<keyword id="KW-0663">Pyridoxal phosphate</keyword>
<keyword id="KW-0808">Transferase</keyword>
<sequence>MSYYDTIFSKHIDKIKSEGRYREFKALKRQADNFPFAEHANKQIVMWCINDYLGMSKHAKVMQASIDALLKYGVGSGGTRNIGGNNIAILELEKELADLHKKQAALVFTSGFVANDTTLASLAKIMPDIVFFSDELNHASIIAGVTSSRAEKYIYRHLDVKHLEELLQSVDINRPKIIVFESAYSMDGFFSPIKDIINLAKKYNALTFIDEVHTVGLYGKHGGGIAELLNCSDQIDIIQGTLAKAYGTIGGYITSNHNLVDAIRLTAPGFIFTTSLPPVISTAATHSIRHLKESNEERIKHQEVVTKLKNSFENFNIPYLKNESHIVPIIIGDPIKAASASNMLLNKYGIYVQHINFPTVPRGTERLRIIPTPAHTDKMINDLSIALVHIFAELDIELSSTKELNEEIRLNLIA</sequence>
<protein>
    <recommendedName>
        <fullName>5-aminolevulinate synthase</fullName>
        <ecNumber>2.3.1.37</ecNumber>
    </recommendedName>
    <alternativeName>
        <fullName>5-aminolevulinic acid synthase</fullName>
    </alternativeName>
    <alternativeName>
        <fullName>Delta-ALA synthase</fullName>
    </alternativeName>
    <alternativeName>
        <fullName>Delta-aminolevulinate synthase</fullName>
    </alternativeName>
</protein>
<name>HEM1_RICFE</name>
<proteinExistence type="inferred from homology"/>
<accession>Q4UJV4</accession>
<comment type="catalytic activity">
    <reaction>
        <text>succinyl-CoA + glycine + H(+) = 5-aminolevulinate + CO2 + CoA</text>
        <dbReference type="Rhea" id="RHEA:12921"/>
        <dbReference type="ChEBI" id="CHEBI:15378"/>
        <dbReference type="ChEBI" id="CHEBI:16526"/>
        <dbReference type="ChEBI" id="CHEBI:57287"/>
        <dbReference type="ChEBI" id="CHEBI:57292"/>
        <dbReference type="ChEBI" id="CHEBI:57305"/>
        <dbReference type="ChEBI" id="CHEBI:356416"/>
        <dbReference type="EC" id="2.3.1.37"/>
    </reaction>
</comment>
<comment type="cofactor">
    <cofactor evidence="1">
        <name>pyridoxal 5'-phosphate</name>
        <dbReference type="ChEBI" id="CHEBI:597326"/>
    </cofactor>
</comment>
<comment type="pathway">
    <text>Porphyrin-containing compound metabolism; protoporphyrin-IX biosynthesis; 5-aminolevulinate from glycine: step 1/1.</text>
</comment>
<comment type="subunit">
    <text evidence="1">Homodimer.</text>
</comment>
<comment type="similarity">
    <text evidence="2">Belongs to the class-II pyridoxal-phosphate-dependent aminotransferase family.</text>
</comment>
<organism>
    <name type="scientific">Rickettsia felis (strain ATCC VR-1525 / URRWXCal2)</name>
    <name type="common">Rickettsia azadi</name>
    <dbReference type="NCBI Taxonomy" id="315456"/>
    <lineage>
        <taxon>Bacteria</taxon>
        <taxon>Pseudomonadati</taxon>
        <taxon>Pseudomonadota</taxon>
        <taxon>Alphaproteobacteria</taxon>
        <taxon>Rickettsiales</taxon>
        <taxon>Rickettsiaceae</taxon>
        <taxon>Rickettsieae</taxon>
        <taxon>Rickettsia</taxon>
        <taxon>spotted fever group</taxon>
    </lineage>
</organism>
<dbReference type="EC" id="2.3.1.37"/>
<dbReference type="EMBL" id="CP000053">
    <property type="protein sequence ID" value="AAY62185.1"/>
    <property type="molecule type" value="Genomic_DNA"/>
</dbReference>
<dbReference type="SMR" id="Q4UJV4"/>
<dbReference type="STRING" id="315456.RF_1334"/>
<dbReference type="KEGG" id="rfe:RF_1334"/>
<dbReference type="eggNOG" id="COG0156">
    <property type="taxonomic scope" value="Bacteria"/>
</dbReference>
<dbReference type="HOGENOM" id="CLU_015846_11_1_5"/>
<dbReference type="OrthoDB" id="9807157at2"/>
<dbReference type="UniPathway" id="UPA00251">
    <property type="reaction ID" value="UER00375"/>
</dbReference>
<dbReference type="Proteomes" id="UP000008548">
    <property type="component" value="Chromosome"/>
</dbReference>
<dbReference type="GO" id="GO:0003870">
    <property type="term" value="F:5-aminolevulinate synthase activity"/>
    <property type="evidence" value="ECO:0007669"/>
    <property type="project" value="UniProtKB-EC"/>
</dbReference>
<dbReference type="GO" id="GO:0030170">
    <property type="term" value="F:pyridoxal phosphate binding"/>
    <property type="evidence" value="ECO:0007669"/>
    <property type="project" value="InterPro"/>
</dbReference>
<dbReference type="GO" id="GO:0006782">
    <property type="term" value="P:protoporphyrinogen IX biosynthetic process"/>
    <property type="evidence" value="ECO:0007669"/>
    <property type="project" value="UniProtKB-UniPathway"/>
</dbReference>
<dbReference type="CDD" id="cd06454">
    <property type="entry name" value="KBL_like"/>
    <property type="match status" value="1"/>
</dbReference>
<dbReference type="FunFam" id="3.40.640.10:FF:000006">
    <property type="entry name" value="5-aminolevulinate synthase, mitochondrial"/>
    <property type="match status" value="1"/>
</dbReference>
<dbReference type="Gene3D" id="3.90.1150.10">
    <property type="entry name" value="Aspartate Aminotransferase, domain 1"/>
    <property type="match status" value="1"/>
</dbReference>
<dbReference type="Gene3D" id="3.40.640.10">
    <property type="entry name" value="Type I PLP-dependent aspartate aminotransferase-like (Major domain)"/>
    <property type="match status" value="1"/>
</dbReference>
<dbReference type="InterPro" id="IPR010961">
    <property type="entry name" value="4pyrrol_synth_NH2levulA_synth"/>
</dbReference>
<dbReference type="InterPro" id="IPR001917">
    <property type="entry name" value="Aminotrans_II_pyridoxalP_BS"/>
</dbReference>
<dbReference type="InterPro" id="IPR004839">
    <property type="entry name" value="Aminotransferase_I/II_large"/>
</dbReference>
<dbReference type="InterPro" id="IPR050087">
    <property type="entry name" value="AON_synthase_class-II"/>
</dbReference>
<dbReference type="InterPro" id="IPR015424">
    <property type="entry name" value="PyrdxlP-dep_Trfase"/>
</dbReference>
<dbReference type="InterPro" id="IPR015421">
    <property type="entry name" value="PyrdxlP-dep_Trfase_major"/>
</dbReference>
<dbReference type="InterPro" id="IPR015422">
    <property type="entry name" value="PyrdxlP-dep_Trfase_small"/>
</dbReference>
<dbReference type="NCBIfam" id="TIGR01821">
    <property type="entry name" value="5aminolev_synth"/>
    <property type="match status" value="1"/>
</dbReference>
<dbReference type="PANTHER" id="PTHR13693:SF102">
    <property type="entry name" value="2-AMINO-3-KETOBUTYRATE COENZYME A LIGASE, MITOCHONDRIAL"/>
    <property type="match status" value="1"/>
</dbReference>
<dbReference type="PANTHER" id="PTHR13693">
    <property type="entry name" value="CLASS II AMINOTRANSFERASE/8-AMINO-7-OXONONANOATE SYNTHASE"/>
    <property type="match status" value="1"/>
</dbReference>
<dbReference type="Pfam" id="PF00155">
    <property type="entry name" value="Aminotran_1_2"/>
    <property type="match status" value="1"/>
</dbReference>
<dbReference type="SUPFAM" id="SSF53383">
    <property type="entry name" value="PLP-dependent transferases"/>
    <property type="match status" value="1"/>
</dbReference>
<dbReference type="PROSITE" id="PS00599">
    <property type="entry name" value="AA_TRANSFER_CLASS_2"/>
    <property type="match status" value="1"/>
</dbReference>